<sequence>MKKDTKNLYKEKIVPSLMEEYGYKNVQLVPKLLKISINRGLGEEARSSKEMDANLKELAVIAGQQPTVNKARKSIAGFKIRDGMPVGASVTLRQDRMYAFLERLIHITLPRVRDFRGISAEGFDGRGNYNLGIKDQLIFPEISYDDVNQLQGFDISIVTSANTDEEAYSLLKKFGMPLQARA</sequence>
<proteinExistence type="inferred from homology"/>
<accession>Q4G355</accession>
<name>RK5_EMIHU</name>
<comment type="function">
    <text evidence="1">Binds 5S rRNA, forms part of the central protuberance of the 50S subunit.</text>
</comment>
<comment type="subunit">
    <text evidence="1">Part of the 50S ribosomal subunit; contacts the 5S rRNA.</text>
</comment>
<comment type="subcellular location">
    <subcellularLocation>
        <location>Plastid</location>
        <location>Chloroplast</location>
    </subcellularLocation>
</comment>
<comment type="similarity">
    <text evidence="2">Belongs to the universal ribosomal protein uL5 family.</text>
</comment>
<keyword id="KW-0150">Chloroplast</keyword>
<keyword id="KW-0934">Plastid</keyword>
<keyword id="KW-0687">Ribonucleoprotein</keyword>
<keyword id="KW-0689">Ribosomal protein</keyword>
<keyword id="KW-0694">RNA-binding</keyword>
<keyword id="KW-0699">rRNA-binding</keyword>
<feature type="chain" id="PRO_0000243092" description="Large ribosomal subunit protein uL5c">
    <location>
        <begin position="1"/>
        <end position="182"/>
    </location>
</feature>
<dbReference type="EMBL" id="AY741371">
    <property type="protein sequence ID" value="AAX13911.1"/>
    <property type="molecule type" value="Genomic_DNA"/>
</dbReference>
<dbReference type="RefSeq" id="YP_277412.1">
    <property type="nucleotide sequence ID" value="NC_007288.1"/>
</dbReference>
<dbReference type="SMR" id="Q4G355"/>
<dbReference type="STRING" id="2903.Q4G355"/>
<dbReference type="GeneID" id="3562496"/>
<dbReference type="GO" id="GO:0009507">
    <property type="term" value="C:chloroplast"/>
    <property type="evidence" value="ECO:0007669"/>
    <property type="project" value="UniProtKB-SubCell"/>
</dbReference>
<dbReference type="GO" id="GO:1990904">
    <property type="term" value="C:ribonucleoprotein complex"/>
    <property type="evidence" value="ECO:0007669"/>
    <property type="project" value="UniProtKB-KW"/>
</dbReference>
<dbReference type="GO" id="GO:0005840">
    <property type="term" value="C:ribosome"/>
    <property type="evidence" value="ECO:0007669"/>
    <property type="project" value="UniProtKB-KW"/>
</dbReference>
<dbReference type="GO" id="GO:0019843">
    <property type="term" value="F:rRNA binding"/>
    <property type="evidence" value="ECO:0007669"/>
    <property type="project" value="UniProtKB-UniRule"/>
</dbReference>
<dbReference type="GO" id="GO:0003735">
    <property type="term" value="F:structural constituent of ribosome"/>
    <property type="evidence" value="ECO:0007669"/>
    <property type="project" value="InterPro"/>
</dbReference>
<dbReference type="GO" id="GO:0006412">
    <property type="term" value="P:translation"/>
    <property type="evidence" value="ECO:0007669"/>
    <property type="project" value="UniProtKB-UniRule"/>
</dbReference>
<dbReference type="FunFam" id="3.30.1440.10:FF:000001">
    <property type="entry name" value="50S ribosomal protein L5"/>
    <property type="match status" value="1"/>
</dbReference>
<dbReference type="Gene3D" id="3.30.1440.10">
    <property type="match status" value="1"/>
</dbReference>
<dbReference type="HAMAP" id="MF_01333_B">
    <property type="entry name" value="Ribosomal_uL5_B"/>
    <property type="match status" value="1"/>
</dbReference>
<dbReference type="InterPro" id="IPR002132">
    <property type="entry name" value="Ribosomal_uL5"/>
</dbReference>
<dbReference type="InterPro" id="IPR020930">
    <property type="entry name" value="Ribosomal_uL5_bac-type"/>
</dbReference>
<dbReference type="InterPro" id="IPR031309">
    <property type="entry name" value="Ribosomal_uL5_C"/>
</dbReference>
<dbReference type="InterPro" id="IPR022803">
    <property type="entry name" value="Ribosomal_uL5_dom_sf"/>
</dbReference>
<dbReference type="InterPro" id="IPR031310">
    <property type="entry name" value="Ribosomal_uL5_N"/>
</dbReference>
<dbReference type="NCBIfam" id="NF000585">
    <property type="entry name" value="PRK00010.1"/>
    <property type="match status" value="1"/>
</dbReference>
<dbReference type="PANTHER" id="PTHR11994">
    <property type="entry name" value="60S RIBOSOMAL PROTEIN L11-RELATED"/>
    <property type="match status" value="1"/>
</dbReference>
<dbReference type="Pfam" id="PF00281">
    <property type="entry name" value="Ribosomal_L5"/>
    <property type="match status" value="1"/>
</dbReference>
<dbReference type="Pfam" id="PF00673">
    <property type="entry name" value="Ribosomal_L5_C"/>
    <property type="match status" value="1"/>
</dbReference>
<dbReference type="PIRSF" id="PIRSF002161">
    <property type="entry name" value="Ribosomal_L5"/>
    <property type="match status" value="1"/>
</dbReference>
<dbReference type="SUPFAM" id="SSF55282">
    <property type="entry name" value="RL5-like"/>
    <property type="match status" value="1"/>
</dbReference>
<gene>
    <name type="primary">rpl5</name>
</gene>
<evidence type="ECO:0000250" key="1"/>
<evidence type="ECO:0000305" key="2"/>
<geneLocation type="chloroplast"/>
<organism>
    <name type="scientific">Emiliania huxleyi</name>
    <name type="common">Coccolithophore</name>
    <name type="synonym">Pontosphaera huxleyi</name>
    <dbReference type="NCBI Taxonomy" id="2903"/>
    <lineage>
        <taxon>Eukaryota</taxon>
        <taxon>Haptista</taxon>
        <taxon>Haptophyta</taxon>
        <taxon>Prymnesiophyceae</taxon>
        <taxon>Isochrysidales</taxon>
        <taxon>Noelaerhabdaceae</taxon>
        <taxon>Emiliania</taxon>
    </lineage>
</organism>
<reference key="1">
    <citation type="journal article" date="2005" name="DNA Res.">
        <title>The complete plastid genome sequence of the haptophyte Emiliania huxleyi: a comparison to other plastid genomes.</title>
        <authorList>
            <person name="Sanchez-Puerta M.V."/>
            <person name="Bachvaroff T.R."/>
            <person name="Delwiche C.F."/>
        </authorList>
    </citation>
    <scope>NUCLEOTIDE SEQUENCE [LARGE SCALE GENOMIC DNA]</scope>
    <source>
        <strain>CCMP373 / CSIRO-CS-57 / BT6</strain>
    </source>
</reference>
<protein>
    <recommendedName>
        <fullName evidence="2">Large ribosomal subunit protein uL5c</fullName>
    </recommendedName>
    <alternativeName>
        <fullName>50S ribosomal protein L5, chloroplastic</fullName>
    </alternativeName>
</protein>